<name>ALKB5_XENTR</name>
<sequence>MSATYTDLREKLQSLYRDSPKEVRKRKQPTSDTEEEEAASEPEEEEEARKVRSGIRQVRLFSPDECARIEAKIDEVVSRAEKGLYREHTVDRAPLRNKYFFGEGYTYGAQLQRRGPGQERLYPKGEVDEIPAWVNELVIRRLVEHRVIPEGFVNSAVINDYQPGGCIVSHVDPIHIFERPIVSVSFFSDSALCFGCKFQFKPIRVSEPVFFLPVQRGSVTVLSGYAADEITHCIRPQDIKERRAVVILRKTRTEAPRLEMKSLSSSYQPERLQGSNRQHILKPKRSHRKADPDAAHRPRILEMDKEENRRSVLLPKQRRRSHFSSENYWRRSHDYVDTYTETGEDDGSPVRKVKMRRH</sequence>
<comment type="function">
    <text evidence="1">Dioxygenase that specifically demethylates N(6)-methyladenosine (m6A) RNA, the most prevalent internal modification of messenger RNA (mRNA) in higher eukaryotes. Demethylates RNA by oxidative demethylation, which requires molecular oxygen, alpha-ketoglutarate and iron. Demethylation of m6A mRNA affects mRNA processing, translation and export.</text>
</comment>
<comment type="catalytic activity">
    <reaction evidence="1">
        <text>an N(6)-methyladenosine in mRNA + 2-oxoglutarate + O2 = an adenosine in mRNA + formaldehyde + succinate + CO2</text>
        <dbReference type="Rhea" id="RHEA:49520"/>
        <dbReference type="Rhea" id="RHEA-COMP:12414"/>
        <dbReference type="Rhea" id="RHEA-COMP:12417"/>
        <dbReference type="ChEBI" id="CHEBI:15379"/>
        <dbReference type="ChEBI" id="CHEBI:16526"/>
        <dbReference type="ChEBI" id="CHEBI:16810"/>
        <dbReference type="ChEBI" id="CHEBI:16842"/>
        <dbReference type="ChEBI" id="CHEBI:30031"/>
        <dbReference type="ChEBI" id="CHEBI:74411"/>
        <dbReference type="ChEBI" id="CHEBI:74449"/>
        <dbReference type="EC" id="1.14.11.53"/>
    </reaction>
    <physiologicalReaction direction="left-to-right" evidence="1">
        <dbReference type="Rhea" id="RHEA:49521"/>
    </physiologicalReaction>
</comment>
<comment type="cofactor">
    <cofactor evidence="1">
        <name>Fe(2+)</name>
        <dbReference type="ChEBI" id="CHEBI:29033"/>
    </cofactor>
    <text evidence="1">Binds 1 Fe(2+) ion per subunit.</text>
</comment>
<comment type="subunit">
    <text evidence="1">Monomer.</text>
</comment>
<comment type="subcellular location">
    <subcellularLocation>
        <location evidence="1">Nucleus speckle</location>
    </subcellularLocation>
</comment>
<comment type="domain">
    <text evidence="1">The C-terminal disordered region undergoes liquid-liquid phase separation (LLPS) for the formation of paraspeckle membraneless compartment.</text>
</comment>
<comment type="similarity">
    <text evidence="3">Belongs to the alkB family.</text>
</comment>
<proteinExistence type="evidence at transcript level"/>
<accession>Q66JG8</accession>
<accession>F6VI63</accession>
<accession>F6VRK9</accession>
<dbReference type="EC" id="1.14.11.53" evidence="1"/>
<dbReference type="EMBL" id="AAMC01050884">
    <property type="status" value="NOT_ANNOTATED_CDS"/>
    <property type="molecule type" value="Genomic_DNA"/>
</dbReference>
<dbReference type="EMBL" id="AAMC01050885">
    <property type="status" value="NOT_ANNOTATED_CDS"/>
    <property type="molecule type" value="Genomic_DNA"/>
</dbReference>
<dbReference type="EMBL" id="BC080920">
    <property type="protein sequence ID" value="AAH80920.1"/>
    <property type="molecule type" value="mRNA"/>
</dbReference>
<dbReference type="RefSeq" id="NP_001008038.1">
    <property type="nucleotide sequence ID" value="NM_001008037.1"/>
</dbReference>
<dbReference type="SMR" id="Q66JG8"/>
<dbReference type="FunCoup" id="Q66JG8">
    <property type="interactions" value="2832"/>
</dbReference>
<dbReference type="STRING" id="8364.ENSXETP00000024527"/>
<dbReference type="PaxDb" id="8364-ENSXETP00000059003"/>
<dbReference type="DNASU" id="493400"/>
<dbReference type="GeneID" id="493400"/>
<dbReference type="KEGG" id="xtr:493400"/>
<dbReference type="AGR" id="Xenbase:XB-GENE-987580"/>
<dbReference type="CTD" id="54890"/>
<dbReference type="Xenbase" id="XB-GENE-987580">
    <property type="gene designation" value="alkbh5"/>
</dbReference>
<dbReference type="eggNOG" id="KOG4176">
    <property type="taxonomic scope" value="Eukaryota"/>
</dbReference>
<dbReference type="InParanoid" id="Q66JG8"/>
<dbReference type="OMA" id="GWVHELV"/>
<dbReference type="OrthoDB" id="271595at2759"/>
<dbReference type="TreeFam" id="TF329212"/>
<dbReference type="Reactome" id="R-XTR-73943">
    <property type="pathway name" value="Reversal of alkylation damage by DNA dioxygenases"/>
</dbReference>
<dbReference type="Proteomes" id="UP000008143">
    <property type="component" value="Chromosome 9"/>
</dbReference>
<dbReference type="Bgee" id="ENSXETG00000005769">
    <property type="expression patterns" value="Expressed in skeletal muscle tissue and 17 other cell types or tissues"/>
</dbReference>
<dbReference type="GO" id="GO:0016607">
    <property type="term" value="C:nuclear speck"/>
    <property type="evidence" value="ECO:0000250"/>
    <property type="project" value="UniProtKB"/>
</dbReference>
<dbReference type="GO" id="GO:0005634">
    <property type="term" value="C:nucleus"/>
    <property type="evidence" value="ECO:0000250"/>
    <property type="project" value="UniProtKB"/>
</dbReference>
<dbReference type="GO" id="GO:0042382">
    <property type="term" value="C:paraspeckles"/>
    <property type="evidence" value="ECO:0000250"/>
    <property type="project" value="UniProtKB"/>
</dbReference>
<dbReference type="GO" id="GO:0016706">
    <property type="term" value="F:2-oxoglutarate-dependent dioxygenase activity"/>
    <property type="evidence" value="ECO:0000250"/>
    <property type="project" value="UniProtKB"/>
</dbReference>
<dbReference type="GO" id="GO:0046872">
    <property type="term" value="F:metal ion binding"/>
    <property type="evidence" value="ECO:0007669"/>
    <property type="project" value="UniProtKB-KW"/>
</dbReference>
<dbReference type="GO" id="GO:0140693">
    <property type="term" value="F:molecular condensate scaffold activity"/>
    <property type="evidence" value="ECO:0000250"/>
    <property type="project" value="UniProtKB"/>
</dbReference>
<dbReference type="GO" id="GO:1990931">
    <property type="term" value="F:mRNA N6-methyladenosine dioxygenase activity"/>
    <property type="evidence" value="ECO:0000250"/>
    <property type="project" value="UniProtKB"/>
</dbReference>
<dbReference type="GO" id="GO:0140694">
    <property type="term" value="P:membraneless organelle assembly"/>
    <property type="evidence" value="ECO:0000250"/>
    <property type="project" value="UniProtKB"/>
</dbReference>
<dbReference type="GO" id="GO:0061157">
    <property type="term" value="P:mRNA destabilization"/>
    <property type="evidence" value="ECO:0000250"/>
    <property type="project" value="UniProtKB"/>
</dbReference>
<dbReference type="GO" id="GO:0006397">
    <property type="term" value="P:mRNA processing"/>
    <property type="evidence" value="ECO:0007669"/>
    <property type="project" value="InterPro"/>
</dbReference>
<dbReference type="GO" id="GO:0010793">
    <property type="term" value="P:regulation of mRNA export from nucleus"/>
    <property type="evidence" value="ECO:0000250"/>
    <property type="project" value="UniProtKB"/>
</dbReference>
<dbReference type="GO" id="GO:0050684">
    <property type="term" value="P:regulation of mRNA processing"/>
    <property type="evidence" value="ECO:0000250"/>
    <property type="project" value="UniProtKB"/>
</dbReference>
<dbReference type="GO" id="GO:0006417">
    <property type="term" value="P:regulation of translation"/>
    <property type="evidence" value="ECO:0000250"/>
    <property type="project" value="UniProtKB"/>
</dbReference>
<dbReference type="GO" id="GO:0001666">
    <property type="term" value="P:response to hypoxia"/>
    <property type="evidence" value="ECO:0000250"/>
    <property type="project" value="UniProtKB"/>
</dbReference>
<dbReference type="GO" id="GO:0007283">
    <property type="term" value="P:spermatogenesis"/>
    <property type="evidence" value="ECO:0000250"/>
    <property type="project" value="UniProtKB"/>
</dbReference>
<dbReference type="FunFam" id="2.60.120.590:FF:000002">
    <property type="entry name" value="RNA demethylase ALKBH5"/>
    <property type="match status" value="1"/>
</dbReference>
<dbReference type="Gene3D" id="2.60.120.590">
    <property type="entry name" value="Alpha-ketoglutarate-dependent dioxygenase AlkB-like"/>
    <property type="match status" value="1"/>
</dbReference>
<dbReference type="InterPro" id="IPR027450">
    <property type="entry name" value="AlkB-like"/>
</dbReference>
<dbReference type="InterPro" id="IPR037151">
    <property type="entry name" value="AlkB-like_sf"/>
</dbReference>
<dbReference type="InterPro" id="IPR032860">
    <property type="entry name" value="ALKBH5"/>
</dbReference>
<dbReference type="PANTHER" id="PTHR32074">
    <property type="entry name" value="RNA DEMETHYLASE ALKBH5"/>
    <property type="match status" value="1"/>
</dbReference>
<dbReference type="PANTHER" id="PTHR32074:SF2">
    <property type="entry name" value="RNA DEMETHYLASE ALKBH5"/>
    <property type="match status" value="1"/>
</dbReference>
<dbReference type="Pfam" id="PF13532">
    <property type="entry name" value="2OG-FeII_Oxy_2"/>
    <property type="match status" value="1"/>
</dbReference>
<dbReference type="SUPFAM" id="SSF51197">
    <property type="entry name" value="Clavaminate synthase-like"/>
    <property type="match status" value="1"/>
</dbReference>
<reference key="1">
    <citation type="journal article" date="2010" name="Science">
        <title>The genome of the Western clawed frog Xenopus tropicalis.</title>
        <authorList>
            <person name="Hellsten U."/>
            <person name="Harland R.M."/>
            <person name="Gilchrist M.J."/>
            <person name="Hendrix D."/>
            <person name="Jurka J."/>
            <person name="Kapitonov V."/>
            <person name="Ovcharenko I."/>
            <person name="Putnam N.H."/>
            <person name="Shu S."/>
            <person name="Taher L."/>
            <person name="Blitz I.L."/>
            <person name="Blumberg B."/>
            <person name="Dichmann D.S."/>
            <person name="Dubchak I."/>
            <person name="Amaya E."/>
            <person name="Detter J.C."/>
            <person name="Fletcher R."/>
            <person name="Gerhard D.S."/>
            <person name="Goodstein D."/>
            <person name="Graves T."/>
            <person name="Grigoriev I.V."/>
            <person name="Grimwood J."/>
            <person name="Kawashima T."/>
            <person name="Lindquist E."/>
            <person name="Lucas S.M."/>
            <person name="Mead P.E."/>
            <person name="Mitros T."/>
            <person name="Ogino H."/>
            <person name="Ohta Y."/>
            <person name="Poliakov A.V."/>
            <person name="Pollet N."/>
            <person name="Robert J."/>
            <person name="Salamov A."/>
            <person name="Sater A.K."/>
            <person name="Schmutz J."/>
            <person name="Terry A."/>
            <person name="Vize P.D."/>
            <person name="Warren W.C."/>
            <person name="Wells D."/>
            <person name="Wills A."/>
            <person name="Wilson R.K."/>
            <person name="Zimmerman L.B."/>
            <person name="Zorn A.M."/>
            <person name="Grainger R."/>
            <person name="Grammer T."/>
            <person name="Khokha M.K."/>
            <person name="Richardson P.M."/>
            <person name="Rokhsar D.S."/>
        </authorList>
    </citation>
    <scope>NUCLEOTIDE SEQUENCE [LARGE SCALE GENOMIC DNA]</scope>
</reference>
<reference key="2">
    <citation type="submission" date="2004-08" db="EMBL/GenBank/DDBJ databases">
        <authorList>
            <consortium name="NIH - Xenopus Gene Collection (XGC) project"/>
        </authorList>
    </citation>
    <scope>NUCLEOTIDE SEQUENCE [LARGE SCALE MRNA]</scope>
    <source>
        <tissue>Embryo</tissue>
    </source>
</reference>
<organism>
    <name type="scientific">Xenopus tropicalis</name>
    <name type="common">Western clawed frog</name>
    <name type="synonym">Silurana tropicalis</name>
    <dbReference type="NCBI Taxonomy" id="8364"/>
    <lineage>
        <taxon>Eukaryota</taxon>
        <taxon>Metazoa</taxon>
        <taxon>Chordata</taxon>
        <taxon>Craniata</taxon>
        <taxon>Vertebrata</taxon>
        <taxon>Euteleostomi</taxon>
        <taxon>Amphibia</taxon>
        <taxon>Batrachia</taxon>
        <taxon>Anura</taxon>
        <taxon>Pipoidea</taxon>
        <taxon>Pipidae</taxon>
        <taxon>Xenopodinae</taxon>
        <taxon>Xenopus</taxon>
        <taxon>Silurana</taxon>
    </lineage>
</organism>
<gene>
    <name type="primary">alkbh5</name>
</gene>
<keyword id="KW-0223">Dioxygenase</keyword>
<keyword id="KW-1015">Disulfide bond</keyword>
<keyword id="KW-0408">Iron</keyword>
<keyword id="KW-0479">Metal-binding</keyword>
<keyword id="KW-0539">Nucleus</keyword>
<keyword id="KW-0560">Oxidoreductase</keyword>
<keyword id="KW-1185">Reference proteome</keyword>
<protein>
    <recommendedName>
        <fullName>RNA demethylase ALKBH5</fullName>
        <ecNumber evidence="1">1.14.11.53</ecNumber>
    </recommendedName>
    <alternativeName>
        <fullName>Alkylated DNA repair protein alkB homolog 5</fullName>
    </alternativeName>
    <alternativeName>
        <fullName>Alpha-ketoglutarate-dependent dioxygenase alkB homolog 5</fullName>
    </alternativeName>
</protein>
<feature type="chain" id="PRO_0000239286" description="RNA demethylase ALKBH5">
    <location>
        <begin position="1"/>
        <end position="358"/>
    </location>
</feature>
<feature type="region of interest" description="Disordered" evidence="2">
    <location>
        <begin position="1"/>
        <end position="50"/>
    </location>
</feature>
<feature type="region of interest" description="Disordered" evidence="2">
    <location>
        <begin position="259"/>
        <end position="312"/>
    </location>
</feature>
<feature type="region of interest" description="Disordered" evidence="2">
    <location>
        <begin position="334"/>
        <end position="358"/>
    </location>
</feature>
<feature type="compositionally biased region" description="Basic and acidic residues" evidence="2">
    <location>
        <begin position="7"/>
        <end position="22"/>
    </location>
</feature>
<feature type="compositionally biased region" description="Acidic residues" evidence="2">
    <location>
        <begin position="32"/>
        <end position="46"/>
    </location>
</feature>
<feature type="compositionally biased region" description="Polar residues" evidence="2">
    <location>
        <begin position="262"/>
        <end position="278"/>
    </location>
</feature>
<feature type="compositionally biased region" description="Basic residues" evidence="2">
    <location>
        <begin position="279"/>
        <end position="288"/>
    </location>
</feature>
<feature type="compositionally biased region" description="Basic and acidic residues" evidence="2">
    <location>
        <begin position="289"/>
        <end position="310"/>
    </location>
</feature>
<feature type="active site" evidence="1">
    <location>
        <position position="105"/>
    </location>
</feature>
<feature type="binding site" evidence="1">
    <location>
        <position position="159"/>
    </location>
    <ligand>
        <name>2-oxoglutarate</name>
        <dbReference type="ChEBI" id="CHEBI:16810"/>
    </ligand>
</feature>
<feature type="binding site" evidence="1">
    <location>
        <position position="161"/>
    </location>
    <ligand>
        <name>2-oxoglutarate</name>
        <dbReference type="ChEBI" id="CHEBI:16810"/>
    </ligand>
</feature>
<feature type="binding site" evidence="1">
    <location>
        <position position="170"/>
    </location>
    <ligand>
        <name>2-oxoglutarate</name>
        <dbReference type="ChEBI" id="CHEBI:16810"/>
    </ligand>
</feature>
<feature type="binding site" evidence="1">
    <location>
        <position position="232"/>
    </location>
    <ligand>
        <name>2-oxoglutarate</name>
        <dbReference type="ChEBI" id="CHEBI:16810"/>
    </ligand>
</feature>
<feature type="binding site" evidence="1">
    <location>
        <position position="243"/>
    </location>
    <ligand>
        <name>2-oxoglutarate</name>
        <dbReference type="ChEBI" id="CHEBI:16810"/>
    </ligand>
</feature>
<feature type="disulfide bond" evidence="1">
    <location>
        <begin position="196"/>
        <end position="233"/>
    </location>
</feature>
<evidence type="ECO:0000250" key="1">
    <source>
        <dbReference type="UniProtKB" id="Q6P6C2"/>
    </source>
</evidence>
<evidence type="ECO:0000256" key="2">
    <source>
        <dbReference type="SAM" id="MobiDB-lite"/>
    </source>
</evidence>
<evidence type="ECO:0000305" key="3"/>